<keyword id="KW-1015">Disulfide bond</keyword>
<keyword id="KW-0325">Glycoprotein</keyword>
<keyword id="KW-0393">Immunoglobulin domain</keyword>
<keyword id="KW-0433">Leucine-rich repeat</keyword>
<keyword id="KW-0472">Membrane</keyword>
<keyword id="KW-1267">Proteomics identification</keyword>
<keyword id="KW-1185">Reference proteome</keyword>
<keyword id="KW-0677">Repeat</keyword>
<keyword id="KW-0732">Signal</keyword>
<keyword id="KW-0812">Transmembrane</keyword>
<keyword id="KW-1133">Transmembrane helix</keyword>
<comment type="subcellular location">
    <subcellularLocation>
        <location evidence="4">Membrane</location>
        <topology evidence="4">Single-pass membrane protein</topology>
    </subcellularLocation>
</comment>
<feature type="signal peptide" evidence="1">
    <location>
        <begin position="1"/>
        <end position="20"/>
    </location>
</feature>
<feature type="chain" id="PRO_0000231596" description="Leucine-rich repeat-containing protein 24">
    <location>
        <begin position="21"/>
        <end position="513"/>
    </location>
</feature>
<feature type="transmembrane region" description="Helical" evidence="1">
    <location>
        <begin position="406"/>
        <end position="426"/>
    </location>
</feature>
<feature type="domain" description="LRRNT">
    <location>
        <begin position="21"/>
        <end position="50"/>
    </location>
</feature>
<feature type="repeat" description="LRR 1">
    <location>
        <begin position="51"/>
        <end position="72"/>
    </location>
</feature>
<feature type="repeat" description="LRR 2">
    <location>
        <begin position="75"/>
        <end position="96"/>
    </location>
</feature>
<feature type="repeat" description="LRR 3">
    <location>
        <begin position="99"/>
        <end position="120"/>
    </location>
</feature>
<feature type="repeat" description="LRR 4">
    <location>
        <begin position="123"/>
        <end position="144"/>
    </location>
</feature>
<feature type="repeat" description="LRR 5">
    <location>
        <begin position="147"/>
        <end position="168"/>
    </location>
</feature>
<feature type="repeat" description="LRR 6">
    <location>
        <begin position="171"/>
        <end position="192"/>
    </location>
</feature>
<feature type="domain" description="LRRCT">
    <location>
        <begin position="204"/>
        <end position="259"/>
    </location>
</feature>
<feature type="domain" description="Ig-like C2-type">
    <location>
        <begin position="260"/>
        <end position="361"/>
    </location>
</feature>
<feature type="region of interest" description="Disordered" evidence="3">
    <location>
        <begin position="365"/>
        <end position="391"/>
    </location>
</feature>
<feature type="glycosylation site" description="N-linked (GlcNAc...) asparagine" evidence="1">
    <location>
        <position position="334"/>
    </location>
</feature>
<feature type="glycosylation site" description="N-linked (GlcNAc...) asparagine" evidence="1">
    <location>
        <position position="363"/>
    </location>
</feature>
<feature type="disulfide bond" evidence="2">
    <location>
        <begin position="281"/>
        <end position="345"/>
    </location>
</feature>
<feature type="sequence conflict" description="In Ref. 1; BAD97811 and 3; AAI11068." evidence="4" ref="1 3">
    <original>E</original>
    <variation>A</variation>
    <location>
        <position position="494"/>
    </location>
</feature>
<reference key="1">
    <citation type="submission" date="2004-04" db="EMBL/GenBank/DDBJ databases">
        <title>Novel gene containing leucine rich repeat on human chromosome 8.</title>
        <authorList>
            <person name="Shimizu N."/>
            <person name="Asakawa S."/>
            <person name="Shimizu A."/>
            <person name="Yamazaki S."/>
            <person name="Ishikawa S.K."/>
        </authorList>
    </citation>
    <scope>NUCLEOTIDE SEQUENCE [MRNA]</scope>
    <source>
        <tissue>Brain</tissue>
    </source>
</reference>
<reference key="2">
    <citation type="journal article" date="2006" name="Nature">
        <title>DNA sequence and analysis of human chromosome 8.</title>
        <authorList>
            <person name="Nusbaum C."/>
            <person name="Mikkelsen T.S."/>
            <person name="Zody M.C."/>
            <person name="Asakawa S."/>
            <person name="Taudien S."/>
            <person name="Garber M."/>
            <person name="Kodira C.D."/>
            <person name="Schueler M.G."/>
            <person name="Shimizu A."/>
            <person name="Whittaker C.A."/>
            <person name="Chang J.L."/>
            <person name="Cuomo C.A."/>
            <person name="Dewar K."/>
            <person name="FitzGerald M.G."/>
            <person name="Yang X."/>
            <person name="Allen N.R."/>
            <person name="Anderson S."/>
            <person name="Asakawa T."/>
            <person name="Blechschmidt K."/>
            <person name="Bloom T."/>
            <person name="Borowsky M.L."/>
            <person name="Butler J."/>
            <person name="Cook A."/>
            <person name="Corum B."/>
            <person name="DeArellano K."/>
            <person name="DeCaprio D."/>
            <person name="Dooley K.T."/>
            <person name="Dorris L. III"/>
            <person name="Engels R."/>
            <person name="Gloeckner G."/>
            <person name="Hafez N."/>
            <person name="Hagopian D.S."/>
            <person name="Hall J.L."/>
            <person name="Ishikawa S.K."/>
            <person name="Jaffe D.B."/>
            <person name="Kamat A."/>
            <person name="Kudoh J."/>
            <person name="Lehmann R."/>
            <person name="Lokitsang T."/>
            <person name="Macdonald P."/>
            <person name="Major J.E."/>
            <person name="Matthews C.D."/>
            <person name="Mauceli E."/>
            <person name="Menzel U."/>
            <person name="Mihalev A.H."/>
            <person name="Minoshima S."/>
            <person name="Murayama Y."/>
            <person name="Naylor J.W."/>
            <person name="Nicol R."/>
            <person name="Nguyen C."/>
            <person name="O'Leary S.B."/>
            <person name="O'Neill K."/>
            <person name="Parker S.C.J."/>
            <person name="Polley A."/>
            <person name="Raymond C.K."/>
            <person name="Reichwald K."/>
            <person name="Rodriguez J."/>
            <person name="Sasaki T."/>
            <person name="Schilhabel M."/>
            <person name="Siddiqui R."/>
            <person name="Smith C.L."/>
            <person name="Sneddon T.P."/>
            <person name="Talamas J.A."/>
            <person name="Tenzin P."/>
            <person name="Topham K."/>
            <person name="Venkataraman V."/>
            <person name="Wen G."/>
            <person name="Yamazaki S."/>
            <person name="Young S.K."/>
            <person name="Zeng Q."/>
            <person name="Zimmer A.R."/>
            <person name="Rosenthal A."/>
            <person name="Birren B.W."/>
            <person name="Platzer M."/>
            <person name="Shimizu N."/>
            <person name="Lander E.S."/>
        </authorList>
    </citation>
    <scope>NUCLEOTIDE SEQUENCE [LARGE SCALE GENOMIC DNA]</scope>
</reference>
<reference key="3">
    <citation type="journal article" date="2004" name="Genome Res.">
        <title>The status, quality, and expansion of the NIH full-length cDNA project: the Mammalian Gene Collection (MGC).</title>
        <authorList>
            <consortium name="The MGC Project Team"/>
        </authorList>
    </citation>
    <scope>NUCLEOTIDE SEQUENCE [LARGE SCALE MRNA]</scope>
    <source>
        <tissue>Brain</tissue>
    </source>
</reference>
<dbReference type="EMBL" id="AB178281">
    <property type="protein sequence ID" value="BAD97811.1"/>
    <property type="molecule type" value="mRNA"/>
</dbReference>
<dbReference type="EMBL" id="AC084125">
    <property type="status" value="NOT_ANNOTATED_CDS"/>
    <property type="molecule type" value="Genomic_DNA"/>
</dbReference>
<dbReference type="EMBL" id="BC111067">
    <property type="protein sequence ID" value="AAI11068.1"/>
    <property type="molecule type" value="mRNA"/>
</dbReference>
<dbReference type="CCDS" id="CCDS34969.1"/>
<dbReference type="RefSeq" id="NP_001019849.2">
    <property type="nucleotide sequence ID" value="NM_001024678.4"/>
</dbReference>
<dbReference type="SMR" id="Q50LG9"/>
<dbReference type="BioGRID" id="137417">
    <property type="interactions" value="16"/>
</dbReference>
<dbReference type="FunCoup" id="Q50LG9">
    <property type="interactions" value="111"/>
</dbReference>
<dbReference type="IntAct" id="Q50LG9">
    <property type="interactions" value="13"/>
</dbReference>
<dbReference type="STRING" id="9606.ENSP00000434849"/>
<dbReference type="GlyCosmos" id="Q50LG9">
    <property type="glycosylation" value="2 sites, No reported glycans"/>
</dbReference>
<dbReference type="GlyGen" id="Q50LG9">
    <property type="glycosylation" value="3 sites, 2 N-linked glycans (2 sites)"/>
</dbReference>
<dbReference type="iPTMnet" id="Q50LG9"/>
<dbReference type="PhosphoSitePlus" id="Q50LG9"/>
<dbReference type="BioMuta" id="LRRC24"/>
<dbReference type="DMDM" id="296434571"/>
<dbReference type="jPOST" id="Q50LG9"/>
<dbReference type="MassIVE" id="Q50LG9"/>
<dbReference type="PaxDb" id="9606-ENSP00000434849"/>
<dbReference type="PeptideAtlas" id="Q50LG9"/>
<dbReference type="ProteomicsDB" id="62419"/>
<dbReference type="Antibodypedia" id="49490">
    <property type="antibodies" value="49 antibodies from 14 providers"/>
</dbReference>
<dbReference type="DNASU" id="441381"/>
<dbReference type="Ensembl" id="ENST00000529415.7">
    <property type="protein sequence ID" value="ENSP00000434849.1"/>
    <property type="gene ID" value="ENSG00000254402.7"/>
</dbReference>
<dbReference type="GeneID" id="441381"/>
<dbReference type="KEGG" id="hsa:441381"/>
<dbReference type="MANE-Select" id="ENST00000529415.7">
    <property type="protein sequence ID" value="ENSP00000434849.1"/>
    <property type="RefSeq nucleotide sequence ID" value="NM_001024678.4"/>
    <property type="RefSeq protein sequence ID" value="NP_001019849.2"/>
</dbReference>
<dbReference type="UCSC" id="uc003zdm.4">
    <property type="organism name" value="human"/>
</dbReference>
<dbReference type="AGR" id="HGNC:28947"/>
<dbReference type="CTD" id="441381"/>
<dbReference type="DisGeNET" id="441381"/>
<dbReference type="GeneCards" id="LRRC24"/>
<dbReference type="HGNC" id="HGNC:28947">
    <property type="gene designation" value="LRRC24"/>
</dbReference>
<dbReference type="HPA" id="ENSG00000254402">
    <property type="expression patterns" value="Tissue enhanced (pituitary)"/>
</dbReference>
<dbReference type="MIM" id="620672">
    <property type="type" value="gene"/>
</dbReference>
<dbReference type="neXtProt" id="NX_Q50LG9"/>
<dbReference type="PharmGKB" id="PA142671520"/>
<dbReference type="VEuPathDB" id="HostDB:ENSG00000254402"/>
<dbReference type="eggNOG" id="KOG0619">
    <property type="taxonomic scope" value="Eukaryota"/>
</dbReference>
<dbReference type="GeneTree" id="ENSGT00940000160141"/>
<dbReference type="HOGENOM" id="CLU_000288_18_24_1"/>
<dbReference type="InParanoid" id="Q50LG9"/>
<dbReference type="OMA" id="AAYEIHC"/>
<dbReference type="OrthoDB" id="8400687at2759"/>
<dbReference type="PAN-GO" id="Q50LG9">
    <property type="GO annotations" value="2 GO annotations based on evolutionary models"/>
</dbReference>
<dbReference type="PhylomeDB" id="Q50LG9"/>
<dbReference type="TreeFam" id="TF320455"/>
<dbReference type="PathwayCommons" id="Q50LG9"/>
<dbReference type="SignaLink" id="Q50LG9"/>
<dbReference type="BioGRID-ORCS" id="441381">
    <property type="hits" value="14 hits in 1077 CRISPR screens"/>
</dbReference>
<dbReference type="CD-CODE" id="91857CE7">
    <property type="entry name" value="Nucleolus"/>
</dbReference>
<dbReference type="ChiTaRS" id="LRRC24">
    <property type="organism name" value="human"/>
</dbReference>
<dbReference type="GenomeRNAi" id="441381"/>
<dbReference type="Pharos" id="Q50LG9">
    <property type="development level" value="Tdark"/>
</dbReference>
<dbReference type="PRO" id="PR:Q50LG9"/>
<dbReference type="Proteomes" id="UP000005640">
    <property type="component" value="Chromosome 8"/>
</dbReference>
<dbReference type="RNAct" id="Q50LG9">
    <property type="molecule type" value="protein"/>
</dbReference>
<dbReference type="Bgee" id="ENSG00000254402">
    <property type="expression patterns" value="Expressed in cortical plate and 92 other cell types or tissues"/>
</dbReference>
<dbReference type="ExpressionAtlas" id="Q50LG9">
    <property type="expression patterns" value="baseline and differential"/>
</dbReference>
<dbReference type="GO" id="GO:0009897">
    <property type="term" value="C:external side of plasma membrane"/>
    <property type="evidence" value="ECO:0000318"/>
    <property type="project" value="GO_Central"/>
</dbReference>
<dbReference type="GO" id="GO:0031012">
    <property type="term" value="C:extracellular matrix"/>
    <property type="evidence" value="ECO:0000318"/>
    <property type="project" value="GO_Central"/>
</dbReference>
<dbReference type="GO" id="GO:0005615">
    <property type="term" value="C:extracellular space"/>
    <property type="evidence" value="ECO:0000318"/>
    <property type="project" value="GO_Central"/>
</dbReference>
<dbReference type="GO" id="GO:0051965">
    <property type="term" value="P:positive regulation of synapse assembly"/>
    <property type="evidence" value="ECO:0007669"/>
    <property type="project" value="Ensembl"/>
</dbReference>
<dbReference type="FunFam" id="2.60.40.10:FF:001325">
    <property type="entry name" value="Leucine rich repeat containing 24"/>
    <property type="match status" value="1"/>
</dbReference>
<dbReference type="FunFam" id="3.80.10.10:FF:000082">
    <property type="entry name" value="Leucine-rich repeat-containing 24"/>
    <property type="match status" value="1"/>
</dbReference>
<dbReference type="FunFam" id="3.80.10.10:FF:000184">
    <property type="entry name" value="leucine-rich repeat-containing protein 24"/>
    <property type="match status" value="1"/>
</dbReference>
<dbReference type="Gene3D" id="2.60.40.10">
    <property type="entry name" value="Immunoglobulins"/>
    <property type="match status" value="1"/>
</dbReference>
<dbReference type="Gene3D" id="3.80.10.10">
    <property type="entry name" value="Ribonuclease Inhibitor"/>
    <property type="match status" value="2"/>
</dbReference>
<dbReference type="InterPro" id="IPR000483">
    <property type="entry name" value="Cys-rich_flank_reg_C"/>
</dbReference>
<dbReference type="InterPro" id="IPR007110">
    <property type="entry name" value="Ig-like_dom"/>
</dbReference>
<dbReference type="InterPro" id="IPR036179">
    <property type="entry name" value="Ig-like_dom_sf"/>
</dbReference>
<dbReference type="InterPro" id="IPR013783">
    <property type="entry name" value="Ig-like_fold"/>
</dbReference>
<dbReference type="InterPro" id="IPR003599">
    <property type="entry name" value="Ig_sub"/>
</dbReference>
<dbReference type="InterPro" id="IPR003598">
    <property type="entry name" value="Ig_sub2"/>
</dbReference>
<dbReference type="InterPro" id="IPR001611">
    <property type="entry name" value="Leu-rich_rpt"/>
</dbReference>
<dbReference type="InterPro" id="IPR003591">
    <property type="entry name" value="Leu-rich_rpt_typical-subtyp"/>
</dbReference>
<dbReference type="InterPro" id="IPR032675">
    <property type="entry name" value="LRR_dom_sf"/>
</dbReference>
<dbReference type="InterPro" id="IPR000372">
    <property type="entry name" value="LRRNT"/>
</dbReference>
<dbReference type="InterPro" id="IPR050333">
    <property type="entry name" value="SLRP"/>
</dbReference>
<dbReference type="PANTHER" id="PTHR45712">
    <property type="entry name" value="AGAP008170-PA"/>
    <property type="match status" value="1"/>
</dbReference>
<dbReference type="PANTHER" id="PTHR45712:SF1">
    <property type="entry name" value="NEPHROCAN"/>
    <property type="match status" value="1"/>
</dbReference>
<dbReference type="Pfam" id="PF13927">
    <property type="entry name" value="Ig_3"/>
    <property type="match status" value="1"/>
</dbReference>
<dbReference type="Pfam" id="PF13855">
    <property type="entry name" value="LRR_8"/>
    <property type="match status" value="2"/>
</dbReference>
<dbReference type="SMART" id="SM00409">
    <property type="entry name" value="IG"/>
    <property type="match status" value="1"/>
</dbReference>
<dbReference type="SMART" id="SM00408">
    <property type="entry name" value="IGc2"/>
    <property type="match status" value="1"/>
</dbReference>
<dbReference type="SMART" id="SM00369">
    <property type="entry name" value="LRR_TYP"/>
    <property type="match status" value="6"/>
</dbReference>
<dbReference type="SMART" id="SM00082">
    <property type="entry name" value="LRRCT"/>
    <property type="match status" value="1"/>
</dbReference>
<dbReference type="SMART" id="SM00013">
    <property type="entry name" value="LRRNT"/>
    <property type="match status" value="1"/>
</dbReference>
<dbReference type="SUPFAM" id="SSF48726">
    <property type="entry name" value="Immunoglobulin"/>
    <property type="match status" value="1"/>
</dbReference>
<dbReference type="SUPFAM" id="SSF52058">
    <property type="entry name" value="L domain-like"/>
    <property type="match status" value="1"/>
</dbReference>
<dbReference type="PROSITE" id="PS50835">
    <property type="entry name" value="IG_LIKE"/>
    <property type="match status" value="1"/>
</dbReference>
<dbReference type="PROSITE" id="PS51450">
    <property type="entry name" value="LRR"/>
    <property type="match status" value="6"/>
</dbReference>
<gene>
    <name type="primary">LRRC24</name>
</gene>
<accession>Q50LG9</accession>
<name>LRC24_HUMAN</name>
<sequence length="513" mass="55257">MALRAPALLPLLLLLLPLRAAGCPAACRCYSATVECGALRLRVVPLGIPPGTQTLFLQDNNIARLEPGALAPLAALRRLYLHNNSLRALEAGAFRAQPRLLELALTSNRLRGLRSGAFVGLAQLRVLYLAGNQLARLLDFTFLHLPRLQELHLQENSIELLEDQALAGLSSLALLDLSRNQLGTISREALQPLASLQVLRLTENPWRCDCALHWLGAWIKEGGQRLLTSRDRKIMCAEPPRLALQSLLDVSHSSLICIPPSVHVQPLELTANLGEDLRVACQASGYPQPLVTWRKVPQPREGRPRAQAQLEGGLLGLGGHSASDTGSGMLFLSNITLAHAGKYECEASNAGGAARVPFRLLVNASRQQPQQPAQPPPPAARPAGSEPRPEAGSMAFRALGVATQTAIAAAIALLALTALLLVAMICRRRRRRKKARGPPGEGALFVNDYLDGPCTFAQLEELRDERGHEMFVINRSKPLFAEGPAEAPADCGPEQGAGPGLRVPPPVAYEIHC</sequence>
<proteinExistence type="evidence at protein level"/>
<organism>
    <name type="scientific">Homo sapiens</name>
    <name type="common">Human</name>
    <dbReference type="NCBI Taxonomy" id="9606"/>
    <lineage>
        <taxon>Eukaryota</taxon>
        <taxon>Metazoa</taxon>
        <taxon>Chordata</taxon>
        <taxon>Craniata</taxon>
        <taxon>Vertebrata</taxon>
        <taxon>Euteleostomi</taxon>
        <taxon>Mammalia</taxon>
        <taxon>Eutheria</taxon>
        <taxon>Euarchontoglires</taxon>
        <taxon>Primates</taxon>
        <taxon>Haplorrhini</taxon>
        <taxon>Catarrhini</taxon>
        <taxon>Hominidae</taxon>
        <taxon>Homo</taxon>
    </lineage>
</organism>
<evidence type="ECO:0000255" key="1"/>
<evidence type="ECO:0000255" key="2">
    <source>
        <dbReference type="PROSITE-ProRule" id="PRU00114"/>
    </source>
</evidence>
<evidence type="ECO:0000256" key="3">
    <source>
        <dbReference type="SAM" id="MobiDB-lite"/>
    </source>
</evidence>
<evidence type="ECO:0000305" key="4"/>
<protein>
    <recommendedName>
        <fullName>Leucine-rich repeat-containing protein 24</fullName>
    </recommendedName>
</protein>